<sequence length="208" mass="22533">MKIVEVKHPLVKHKLGLMREQDISTKRFRELASEVGSLLTYEATADLETEKVTIEGWNGPVEIDQIKGKKITVVPILRAGLGMMDGVLENVPSARISVVGMYRNEETLEPVPYFQKLVSNIDERMALIVDPMLATGGSVIATIDLLKKAGCSSIKVLVLVAAPEGIAALEKAHPDVELYTASIDQGLNEHGYIIPGLGDAGDKIFGTK</sequence>
<evidence type="ECO:0000255" key="1">
    <source>
        <dbReference type="HAMAP-Rule" id="MF_01218"/>
    </source>
</evidence>
<reference key="1">
    <citation type="journal article" date="2006" name="Mol. Microbiol.">
        <title>Role of pathogenicity island-associated integrases in the genome plasticity of uropathogenic Escherichia coli strain 536.</title>
        <authorList>
            <person name="Hochhut B."/>
            <person name="Wilde C."/>
            <person name="Balling G."/>
            <person name="Middendorf B."/>
            <person name="Dobrindt U."/>
            <person name="Brzuszkiewicz E."/>
            <person name="Gottschalk G."/>
            <person name="Carniel E."/>
            <person name="Hacker J."/>
        </authorList>
    </citation>
    <scope>NUCLEOTIDE SEQUENCE [LARGE SCALE GENOMIC DNA]</scope>
    <source>
        <strain>536 / UPEC</strain>
    </source>
</reference>
<name>UPP_ECOL5</name>
<keyword id="KW-0021">Allosteric enzyme</keyword>
<keyword id="KW-0328">Glycosyltransferase</keyword>
<keyword id="KW-0342">GTP-binding</keyword>
<keyword id="KW-0460">Magnesium</keyword>
<keyword id="KW-0547">Nucleotide-binding</keyword>
<keyword id="KW-0808">Transferase</keyword>
<proteinExistence type="inferred from homology"/>
<dbReference type="EC" id="2.4.2.9" evidence="1"/>
<dbReference type="EMBL" id="CP000247">
    <property type="protein sequence ID" value="ABG70489.1"/>
    <property type="molecule type" value="Genomic_DNA"/>
</dbReference>
<dbReference type="RefSeq" id="WP_001295473.1">
    <property type="nucleotide sequence ID" value="NC_008253.1"/>
</dbReference>
<dbReference type="SMR" id="Q0TEZ0"/>
<dbReference type="GeneID" id="93774638"/>
<dbReference type="KEGG" id="ecp:ECP_2500"/>
<dbReference type="HOGENOM" id="CLU_067096_2_2_6"/>
<dbReference type="UniPathway" id="UPA00574">
    <property type="reaction ID" value="UER00636"/>
</dbReference>
<dbReference type="Proteomes" id="UP000009182">
    <property type="component" value="Chromosome"/>
</dbReference>
<dbReference type="GO" id="GO:0005525">
    <property type="term" value="F:GTP binding"/>
    <property type="evidence" value="ECO:0007669"/>
    <property type="project" value="UniProtKB-KW"/>
</dbReference>
<dbReference type="GO" id="GO:0000287">
    <property type="term" value="F:magnesium ion binding"/>
    <property type="evidence" value="ECO:0007669"/>
    <property type="project" value="UniProtKB-UniRule"/>
</dbReference>
<dbReference type="GO" id="GO:0004845">
    <property type="term" value="F:uracil phosphoribosyltransferase activity"/>
    <property type="evidence" value="ECO:0007669"/>
    <property type="project" value="UniProtKB-UniRule"/>
</dbReference>
<dbReference type="GO" id="GO:0044206">
    <property type="term" value="P:UMP salvage"/>
    <property type="evidence" value="ECO:0007669"/>
    <property type="project" value="UniProtKB-UniRule"/>
</dbReference>
<dbReference type="GO" id="GO:0006223">
    <property type="term" value="P:uracil salvage"/>
    <property type="evidence" value="ECO:0007669"/>
    <property type="project" value="InterPro"/>
</dbReference>
<dbReference type="CDD" id="cd06223">
    <property type="entry name" value="PRTases_typeI"/>
    <property type="match status" value="1"/>
</dbReference>
<dbReference type="FunFam" id="3.40.50.2020:FF:000003">
    <property type="entry name" value="Uracil phosphoribosyltransferase"/>
    <property type="match status" value="1"/>
</dbReference>
<dbReference type="Gene3D" id="3.40.50.2020">
    <property type="match status" value="1"/>
</dbReference>
<dbReference type="HAMAP" id="MF_01218_B">
    <property type="entry name" value="Upp_B"/>
    <property type="match status" value="1"/>
</dbReference>
<dbReference type="InterPro" id="IPR000836">
    <property type="entry name" value="PRibTrfase_dom"/>
</dbReference>
<dbReference type="InterPro" id="IPR029057">
    <property type="entry name" value="PRTase-like"/>
</dbReference>
<dbReference type="InterPro" id="IPR034332">
    <property type="entry name" value="Upp_B"/>
</dbReference>
<dbReference type="InterPro" id="IPR050054">
    <property type="entry name" value="UPRTase/APRTase"/>
</dbReference>
<dbReference type="InterPro" id="IPR005765">
    <property type="entry name" value="Ura_phspho_trans"/>
</dbReference>
<dbReference type="NCBIfam" id="NF001097">
    <property type="entry name" value="PRK00129.1"/>
    <property type="match status" value="1"/>
</dbReference>
<dbReference type="NCBIfam" id="TIGR01091">
    <property type="entry name" value="upp"/>
    <property type="match status" value="1"/>
</dbReference>
<dbReference type="PANTHER" id="PTHR32315">
    <property type="entry name" value="ADENINE PHOSPHORIBOSYLTRANSFERASE"/>
    <property type="match status" value="1"/>
</dbReference>
<dbReference type="PANTHER" id="PTHR32315:SF4">
    <property type="entry name" value="URACIL PHOSPHORIBOSYLTRANSFERASE, CHLOROPLASTIC"/>
    <property type="match status" value="1"/>
</dbReference>
<dbReference type="Pfam" id="PF14681">
    <property type="entry name" value="UPRTase"/>
    <property type="match status" value="1"/>
</dbReference>
<dbReference type="SUPFAM" id="SSF53271">
    <property type="entry name" value="PRTase-like"/>
    <property type="match status" value="1"/>
</dbReference>
<gene>
    <name evidence="1" type="primary">upp</name>
    <name type="ordered locus">ECP_2500</name>
</gene>
<feature type="chain" id="PRO_1000053717" description="Uracil phosphoribosyltransferase">
    <location>
        <begin position="1"/>
        <end position="208"/>
    </location>
</feature>
<feature type="binding site" evidence="1">
    <location>
        <position position="78"/>
    </location>
    <ligand>
        <name>5-phospho-alpha-D-ribose 1-diphosphate</name>
        <dbReference type="ChEBI" id="CHEBI:58017"/>
    </ligand>
</feature>
<feature type="binding site" evidence="1">
    <location>
        <position position="103"/>
    </location>
    <ligand>
        <name>5-phospho-alpha-D-ribose 1-diphosphate</name>
        <dbReference type="ChEBI" id="CHEBI:58017"/>
    </ligand>
</feature>
<feature type="binding site" evidence="1">
    <location>
        <begin position="130"/>
        <end position="138"/>
    </location>
    <ligand>
        <name>5-phospho-alpha-D-ribose 1-diphosphate</name>
        <dbReference type="ChEBI" id="CHEBI:58017"/>
    </ligand>
</feature>
<feature type="binding site" evidence="1">
    <location>
        <position position="193"/>
    </location>
    <ligand>
        <name>uracil</name>
        <dbReference type="ChEBI" id="CHEBI:17568"/>
    </ligand>
</feature>
<feature type="binding site" evidence="1">
    <location>
        <begin position="198"/>
        <end position="200"/>
    </location>
    <ligand>
        <name>uracil</name>
        <dbReference type="ChEBI" id="CHEBI:17568"/>
    </ligand>
</feature>
<feature type="binding site" evidence="1">
    <location>
        <position position="199"/>
    </location>
    <ligand>
        <name>5-phospho-alpha-D-ribose 1-diphosphate</name>
        <dbReference type="ChEBI" id="CHEBI:58017"/>
    </ligand>
</feature>
<protein>
    <recommendedName>
        <fullName evidence="1">Uracil phosphoribosyltransferase</fullName>
        <ecNumber evidence="1">2.4.2.9</ecNumber>
    </recommendedName>
    <alternativeName>
        <fullName evidence="1">UMP pyrophosphorylase</fullName>
    </alternativeName>
    <alternativeName>
        <fullName evidence="1">UPRTase</fullName>
    </alternativeName>
</protein>
<organism>
    <name type="scientific">Escherichia coli O6:K15:H31 (strain 536 / UPEC)</name>
    <dbReference type="NCBI Taxonomy" id="362663"/>
    <lineage>
        <taxon>Bacteria</taxon>
        <taxon>Pseudomonadati</taxon>
        <taxon>Pseudomonadota</taxon>
        <taxon>Gammaproteobacteria</taxon>
        <taxon>Enterobacterales</taxon>
        <taxon>Enterobacteriaceae</taxon>
        <taxon>Escherichia</taxon>
    </lineage>
</organism>
<accession>Q0TEZ0</accession>
<comment type="function">
    <text evidence="1">Catalyzes the conversion of uracil and 5-phospho-alpha-D-ribose 1-diphosphate (PRPP) to UMP and diphosphate.</text>
</comment>
<comment type="catalytic activity">
    <reaction evidence="1">
        <text>UMP + diphosphate = 5-phospho-alpha-D-ribose 1-diphosphate + uracil</text>
        <dbReference type="Rhea" id="RHEA:13017"/>
        <dbReference type="ChEBI" id="CHEBI:17568"/>
        <dbReference type="ChEBI" id="CHEBI:33019"/>
        <dbReference type="ChEBI" id="CHEBI:57865"/>
        <dbReference type="ChEBI" id="CHEBI:58017"/>
        <dbReference type="EC" id="2.4.2.9"/>
    </reaction>
</comment>
<comment type="cofactor">
    <cofactor evidence="1">
        <name>Mg(2+)</name>
        <dbReference type="ChEBI" id="CHEBI:18420"/>
    </cofactor>
    <text evidence="1">Binds 1 Mg(2+) ion per subunit. The magnesium is bound as Mg-PRPP.</text>
</comment>
<comment type="activity regulation">
    <text evidence="1">Allosterically activated by GTP.</text>
</comment>
<comment type="pathway">
    <text evidence="1">Pyrimidine metabolism; UMP biosynthesis via salvage pathway; UMP from uracil: step 1/1.</text>
</comment>
<comment type="similarity">
    <text evidence="1">Belongs to the UPRTase family.</text>
</comment>